<proteinExistence type="inferred from homology"/>
<organism>
    <name type="scientific">Salmonella heidelberg (strain SL476)</name>
    <dbReference type="NCBI Taxonomy" id="454169"/>
    <lineage>
        <taxon>Bacteria</taxon>
        <taxon>Pseudomonadati</taxon>
        <taxon>Pseudomonadota</taxon>
        <taxon>Gammaproteobacteria</taxon>
        <taxon>Enterobacterales</taxon>
        <taxon>Enterobacteriaceae</taxon>
        <taxon>Salmonella</taxon>
    </lineage>
</organism>
<comment type="function">
    <text evidence="1">Specifically dimethylates two adjacent adenosines (A1518 and A1519) in the loop of a conserved hairpin near the 3'-end of 16S rRNA in the 30S particle. May play a critical role in biogenesis of 30S subunits.</text>
</comment>
<comment type="catalytic activity">
    <reaction evidence="1">
        <text>adenosine(1518)/adenosine(1519) in 16S rRNA + 4 S-adenosyl-L-methionine = N(6)-dimethyladenosine(1518)/N(6)-dimethyladenosine(1519) in 16S rRNA + 4 S-adenosyl-L-homocysteine + 4 H(+)</text>
        <dbReference type="Rhea" id="RHEA:19609"/>
        <dbReference type="Rhea" id="RHEA-COMP:10232"/>
        <dbReference type="Rhea" id="RHEA-COMP:10233"/>
        <dbReference type="ChEBI" id="CHEBI:15378"/>
        <dbReference type="ChEBI" id="CHEBI:57856"/>
        <dbReference type="ChEBI" id="CHEBI:59789"/>
        <dbReference type="ChEBI" id="CHEBI:74411"/>
        <dbReference type="ChEBI" id="CHEBI:74493"/>
        <dbReference type="EC" id="2.1.1.182"/>
    </reaction>
</comment>
<comment type="subcellular location">
    <subcellularLocation>
        <location evidence="1">Cytoplasm</location>
    </subcellularLocation>
</comment>
<comment type="similarity">
    <text evidence="1">Belongs to the class I-like SAM-binding methyltransferase superfamily. rRNA adenine N(6)-methyltransferase family. RsmA subfamily.</text>
</comment>
<protein>
    <recommendedName>
        <fullName evidence="1">Ribosomal RNA small subunit methyltransferase A</fullName>
        <ecNumber evidence="1">2.1.1.182</ecNumber>
    </recommendedName>
    <alternativeName>
        <fullName evidence="1">16S rRNA (adenine(1518)-N(6)/adenine(1519)-N(6))-dimethyltransferase</fullName>
    </alternativeName>
    <alternativeName>
        <fullName evidence="1">16S rRNA dimethyladenosine transferase</fullName>
    </alternativeName>
    <alternativeName>
        <fullName evidence="1">16S rRNA dimethylase</fullName>
    </alternativeName>
    <alternativeName>
        <fullName evidence="1">S-adenosylmethionine-6-N', N'-adenosyl(rRNA) dimethyltransferase</fullName>
    </alternativeName>
</protein>
<accession>B4TJ47</accession>
<keyword id="KW-0963">Cytoplasm</keyword>
<keyword id="KW-0489">Methyltransferase</keyword>
<keyword id="KW-0694">RNA-binding</keyword>
<keyword id="KW-0698">rRNA processing</keyword>
<keyword id="KW-0949">S-adenosyl-L-methionine</keyword>
<keyword id="KW-0808">Transferase</keyword>
<gene>
    <name evidence="1" type="primary">rsmA</name>
    <name evidence="1" type="synonym">ksgA</name>
    <name type="ordered locus">SeHA_C0096</name>
</gene>
<evidence type="ECO:0000255" key="1">
    <source>
        <dbReference type="HAMAP-Rule" id="MF_00607"/>
    </source>
</evidence>
<reference key="1">
    <citation type="journal article" date="2011" name="J. Bacteriol.">
        <title>Comparative genomics of 28 Salmonella enterica isolates: evidence for CRISPR-mediated adaptive sublineage evolution.</title>
        <authorList>
            <person name="Fricke W.F."/>
            <person name="Mammel M.K."/>
            <person name="McDermott P.F."/>
            <person name="Tartera C."/>
            <person name="White D.G."/>
            <person name="Leclerc J.E."/>
            <person name="Ravel J."/>
            <person name="Cebula T.A."/>
        </authorList>
    </citation>
    <scope>NUCLEOTIDE SEQUENCE [LARGE SCALE GENOMIC DNA]</scope>
    <source>
        <strain>SL476</strain>
    </source>
</reference>
<sequence>MNNRVHQGHLARKRFGQNFLNDRFVIDSIVSAINPQKGQAMVEIGPGLAALTEPVGERLDKLTVIELDRDLAARLQTHPFLGPKLTIYQQDAMTMNFGELSAQLGQPLRVFGNLPYNISTPLMFHLFSYTDAIADMHFMLQKEVVNRLVAGPNSKAYGRLSVMAQYYCQVIPVLEVPPSAFTPPPKVDSAVVRLVPHATMPYPVKDIRVLSRITTEAFNQRRKTIRNSLGNLFSVETLTEMGIDPAMRAENISVAQYCQMANYLSENAPLKES</sequence>
<dbReference type="EC" id="2.1.1.182" evidence="1"/>
<dbReference type="EMBL" id="CP001120">
    <property type="protein sequence ID" value="ACF68749.1"/>
    <property type="molecule type" value="Genomic_DNA"/>
</dbReference>
<dbReference type="RefSeq" id="WP_001065397.1">
    <property type="nucleotide sequence ID" value="NC_011083.1"/>
</dbReference>
<dbReference type="SMR" id="B4TJ47"/>
<dbReference type="KEGG" id="seh:SeHA_C0096"/>
<dbReference type="HOGENOM" id="CLU_041220_0_1_6"/>
<dbReference type="Proteomes" id="UP000001866">
    <property type="component" value="Chromosome"/>
</dbReference>
<dbReference type="GO" id="GO:0005829">
    <property type="term" value="C:cytosol"/>
    <property type="evidence" value="ECO:0007669"/>
    <property type="project" value="TreeGrafter"/>
</dbReference>
<dbReference type="GO" id="GO:0052908">
    <property type="term" value="F:16S rRNA (adenine(1518)-N(6)/adenine(1519)-N(6))-dimethyltransferase activity"/>
    <property type="evidence" value="ECO:0007669"/>
    <property type="project" value="UniProtKB-EC"/>
</dbReference>
<dbReference type="GO" id="GO:0003723">
    <property type="term" value="F:RNA binding"/>
    <property type="evidence" value="ECO:0007669"/>
    <property type="project" value="UniProtKB-KW"/>
</dbReference>
<dbReference type="FunFam" id="1.10.8.100:FF:000001">
    <property type="entry name" value="Ribosomal RNA small subunit methyltransferase A"/>
    <property type="match status" value="1"/>
</dbReference>
<dbReference type="FunFam" id="3.40.50.150:FF:000006">
    <property type="entry name" value="Ribosomal RNA small subunit methyltransferase A"/>
    <property type="match status" value="1"/>
</dbReference>
<dbReference type="Gene3D" id="1.10.8.100">
    <property type="entry name" value="Ribosomal RNA adenine dimethylase-like, domain 2"/>
    <property type="match status" value="1"/>
</dbReference>
<dbReference type="Gene3D" id="3.40.50.150">
    <property type="entry name" value="Vaccinia Virus protein VP39"/>
    <property type="match status" value="1"/>
</dbReference>
<dbReference type="HAMAP" id="MF_00607">
    <property type="entry name" value="16SrRNA_methyltr_A"/>
    <property type="match status" value="1"/>
</dbReference>
<dbReference type="InterPro" id="IPR001737">
    <property type="entry name" value="KsgA/Erm"/>
</dbReference>
<dbReference type="InterPro" id="IPR023165">
    <property type="entry name" value="rRNA_Ade_diMease-like_C"/>
</dbReference>
<dbReference type="InterPro" id="IPR020596">
    <property type="entry name" value="rRNA_Ade_Mease_Trfase_CS"/>
</dbReference>
<dbReference type="InterPro" id="IPR020598">
    <property type="entry name" value="rRNA_Ade_methylase_Trfase_N"/>
</dbReference>
<dbReference type="InterPro" id="IPR011530">
    <property type="entry name" value="rRNA_adenine_dimethylase"/>
</dbReference>
<dbReference type="InterPro" id="IPR029063">
    <property type="entry name" value="SAM-dependent_MTases_sf"/>
</dbReference>
<dbReference type="NCBIfam" id="TIGR00755">
    <property type="entry name" value="ksgA"/>
    <property type="match status" value="1"/>
</dbReference>
<dbReference type="PANTHER" id="PTHR11727">
    <property type="entry name" value="DIMETHYLADENOSINE TRANSFERASE"/>
    <property type="match status" value="1"/>
</dbReference>
<dbReference type="PANTHER" id="PTHR11727:SF7">
    <property type="entry name" value="DIMETHYLADENOSINE TRANSFERASE-RELATED"/>
    <property type="match status" value="1"/>
</dbReference>
<dbReference type="Pfam" id="PF00398">
    <property type="entry name" value="RrnaAD"/>
    <property type="match status" value="1"/>
</dbReference>
<dbReference type="SMART" id="SM00650">
    <property type="entry name" value="rADc"/>
    <property type="match status" value="1"/>
</dbReference>
<dbReference type="SUPFAM" id="SSF53335">
    <property type="entry name" value="S-adenosyl-L-methionine-dependent methyltransferases"/>
    <property type="match status" value="1"/>
</dbReference>
<dbReference type="PROSITE" id="PS01131">
    <property type="entry name" value="RRNA_A_DIMETH"/>
    <property type="match status" value="1"/>
</dbReference>
<dbReference type="PROSITE" id="PS51689">
    <property type="entry name" value="SAM_RNA_A_N6_MT"/>
    <property type="match status" value="1"/>
</dbReference>
<name>RSMA_SALHS</name>
<feature type="chain" id="PRO_1000130317" description="Ribosomal RNA small subunit methyltransferase A">
    <location>
        <begin position="1"/>
        <end position="273"/>
    </location>
</feature>
<feature type="binding site" evidence="1">
    <location>
        <position position="18"/>
    </location>
    <ligand>
        <name>S-adenosyl-L-methionine</name>
        <dbReference type="ChEBI" id="CHEBI:59789"/>
    </ligand>
</feature>
<feature type="binding site" evidence="1">
    <location>
        <position position="20"/>
    </location>
    <ligand>
        <name>S-adenosyl-L-methionine</name>
        <dbReference type="ChEBI" id="CHEBI:59789"/>
    </ligand>
</feature>
<feature type="binding site" evidence="1">
    <location>
        <position position="45"/>
    </location>
    <ligand>
        <name>S-adenosyl-L-methionine</name>
        <dbReference type="ChEBI" id="CHEBI:59789"/>
    </ligand>
</feature>
<feature type="binding site" evidence="1">
    <location>
        <position position="66"/>
    </location>
    <ligand>
        <name>S-adenosyl-L-methionine</name>
        <dbReference type="ChEBI" id="CHEBI:59789"/>
    </ligand>
</feature>
<feature type="binding site" evidence="1">
    <location>
        <position position="91"/>
    </location>
    <ligand>
        <name>S-adenosyl-L-methionine</name>
        <dbReference type="ChEBI" id="CHEBI:59789"/>
    </ligand>
</feature>
<feature type="binding site" evidence="1">
    <location>
        <position position="113"/>
    </location>
    <ligand>
        <name>S-adenosyl-L-methionine</name>
        <dbReference type="ChEBI" id="CHEBI:59789"/>
    </ligand>
</feature>